<name>UL140_HCMVM</name>
<reference key="1">
    <citation type="journal article" date="2004" name="J. Gen. Virol.">
        <title>Genetic content of wild-type human cytomegalovirus.</title>
        <authorList>
            <person name="Dolan A."/>
            <person name="Cunningham C."/>
            <person name="Hector R.D."/>
            <person name="Hassan-Walker A.F."/>
            <person name="Lee L."/>
            <person name="Addison C."/>
            <person name="Dargan D.J."/>
            <person name="McGeoch D.J."/>
            <person name="Gatherer D."/>
            <person name="Emery V.C."/>
            <person name="Griffiths P.D."/>
            <person name="Sinzger C."/>
            <person name="McSharry B.P."/>
            <person name="Wilkinson G.W.G."/>
            <person name="Davison A.J."/>
        </authorList>
    </citation>
    <scope>NUCLEOTIDE SEQUENCE [LARGE SCALE GENOMIC DNA]</scope>
</reference>
<protein>
    <recommendedName>
        <fullName>Protein UL140</fullName>
    </recommendedName>
</protein>
<accession>F5HCK7</accession>
<gene>
    <name type="primary">UL140</name>
</gene>
<organismHost>
    <name type="scientific">Homo sapiens</name>
    <name type="common">Human</name>
    <dbReference type="NCBI Taxonomy" id="9606"/>
</organismHost>
<proteinExistence type="predicted"/>
<organism>
    <name type="scientific">Human cytomegalovirus (strain Merlin)</name>
    <name type="common">HHV-5</name>
    <name type="synonym">Human herpesvirus 5</name>
    <dbReference type="NCBI Taxonomy" id="295027"/>
    <lineage>
        <taxon>Viruses</taxon>
        <taxon>Duplodnaviria</taxon>
        <taxon>Heunggongvirae</taxon>
        <taxon>Peploviricota</taxon>
        <taxon>Herviviricetes</taxon>
        <taxon>Herpesvirales</taxon>
        <taxon>Orthoherpesviridae</taxon>
        <taxon>Betaherpesvirinae</taxon>
        <taxon>Cytomegalovirus</taxon>
        <taxon>Cytomegalovirus humanbeta5</taxon>
        <taxon>Human cytomegalovirus</taxon>
    </lineage>
</organism>
<feature type="chain" id="PRO_0000417838" description="Protein UL140">
    <location>
        <begin position="1"/>
        <end position="191"/>
    </location>
</feature>
<feature type="transmembrane region" description="Helical" evidence="1">
    <location>
        <begin position="28"/>
        <end position="48"/>
    </location>
</feature>
<sequence>MTPAQTNGTTTVHPHGAKNGSGGSALPTLVVFGFIVTLLFFLFMLYFWNNDVFRKLLRCAWIQRCCDRFDAWQDEVIYRRPSRRSQSDDESRTNSVSSYVLLSPASDGGFDNPALTEAVDSVDDWATTSVFYATSDETADTERRDSQQLLIELPPEPLPPDVVAAMQKAVKRAVQNALRHSHDSWQLHQTL</sequence>
<evidence type="ECO:0000255" key="1"/>
<evidence type="ECO:0000305" key="2"/>
<keyword id="KW-1043">Host membrane</keyword>
<keyword id="KW-0472">Membrane</keyword>
<keyword id="KW-1185">Reference proteome</keyword>
<keyword id="KW-0812">Transmembrane</keyword>
<keyword id="KW-1133">Transmembrane helix</keyword>
<comment type="subcellular location">
    <subcellularLocation>
        <location evidence="2">Host membrane</location>
        <topology evidence="2">Single-pass membrane protein</topology>
    </subcellularLocation>
</comment>
<dbReference type="EMBL" id="AY446894">
    <property type="protein sequence ID" value="AAR31680.1"/>
    <property type="molecule type" value="Genomic_DNA"/>
</dbReference>
<dbReference type="RefSeq" id="YP_081576.1">
    <property type="nucleotide sequence ID" value="NC_006273.2"/>
</dbReference>
<dbReference type="SMR" id="F5HCK7"/>
<dbReference type="DNASU" id="3077467"/>
<dbReference type="GeneID" id="3077467"/>
<dbReference type="KEGG" id="vg:3077467"/>
<dbReference type="Proteomes" id="UP000000938">
    <property type="component" value="Segment"/>
</dbReference>
<dbReference type="GO" id="GO:0033644">
    <property type="term" value="C:host cell membrane"/>
    <property type="evidence" value="ECO:0007669"/>
    <property type="project" value="UniProtKB-SubCell"/>
</dbReference>
<dbReference type="GO" id="GO:0016020">
    <property type="term" value="C:membrane"/>
    <property type="evidence" value="ECO:0007669"/>
    <property type="project" value="UniProtKB-KW"/>
</dbReference>